<keyword id="KW-0030">Aminoacyl-tRNA synthetase</keyword>
<keyword id="KW-0067">ATP-binding</keyword>
<keyword id="KW-0963">Cytoplasm</keyword>
<keyword id="KW-0436">Ligase</keyword>
<keyword id="KW-0547">Nucleotide-binding</keyword>
<keyword id="KW-0648">Protein biosynthesis</keyword>
<dbReference type="EC" id="6.1.1.21" evidence="1"/>
<dbReference type="EMBL" id="CP000941">
    <property type="protein sequence ID" value="ACA12345.1"/>
    <property type="molecule type" value="Genomic_DNA"/>
</dbReference>
<dbReference type="RefSeq" id="WP_004083412.1">
    <property type="nucleotide sequence ID" value="NC_010513.1"/>
</dbReference>
<dbReference type="SMR" id="B0U3B6"/>
<dbReference type="KEGG" id="xfm:Xfasm12_1422"/>
<dbReference type="HOGENOM" id="CLU_025113_3_0_6"/>
<dbReference type="GO" id="GO:0005737">
    <property type="term" value="C:cytoplasm"/>
    <property type="evidence" value="ECO:0007669"/>
    <property type="project" value="UniProtKB-SubCell"/>
</dbReference>
<dbReference type="GO" id="GO:0005524">
    <property type="term" value="F:ATP binding"/>
    <property type="evidence" value="ECO:0007669"/>
    <property type="project" value="UniProtKB-UniRule"/>
</dbReference>
<dbReference type="GO" id="GO:0004821">
    <property type="term" value="F:histidine-tRNA ligase activity"/>
    <property type="evidence" value="ECO:0007669"/>
    <property type="project" value="UniProtKB-UniRule"/>
</dbReference>
<dbReference type="GO" id="GO:0006427">
    <property type="term" value="P:histidyl-tRNA aminoacylation"/>
    <property type="evidence" value="ECO:0007669"/>
    <property type="project" value="UniProtKB-UniRule"/>
</dbReference>
<dbReference type="CDD" id="cd00773">
    <property type="entry name" value="HisRS-like_core"/>
    <property type="match status" value="1"/>
</dbReference>
<dbReference type="CDD" id="cd00859">
    <property type="entry name" value="HisRS_anticodon"/>
    <property type="match status" value="1"/>
</dbReference>
<dbReference type="FunFam" id="3.40.50.800:FF:000027">
    <property type="entry name" value="Histidine--tRNA ligase"/>
    <property type="match status" value="1"/>
</dbReference>
<dbReference type="Gene3D" id="3.40.50.800">
    <property type="entry name" value="Anticodon-binding domain"/>
    <property type="match status" value="1"/>
</dbReference>
<dbReference type="Gene3D" id="3.30.930.10">
    <property type="entry name" value="Bira Bifunctional Protein, Domain 2"/>
    <property type="match status" value="1"/>
</dbReference>
<dbReference type="HAMAP" id="MF_00127">
    <property type="entry name" value="His_tRNA_synth"/>
    <property type="match status" value="1"/>
</dbReference>
<dbReference type="InterPro" id="IPR006195">
    <property type="entry name" value="aa-tRNA-synth_II"/>
</dbReference>
<dbReference type="InterPro" id="IPR045864">
    <property type="entry name" value="aa-tRNA-synth_II/BPL/LPL"/>
</dbReference>
<dbReference type="InterPro" id="IPR004154">
    <property type="entry name" value="Anticodon-bd"/>
</dbReference>
<dbReference type="InterPro" id="IPR036621">
    <property type="entry name" value="Anticodon-bd_dom_sf"/>
</dbReference>
<dbReference type="InterPro" id="IPR015807">
    <property type="entry name" value="His-tRNA-ligase"/>
</dbReference>
<dbReference type="InterPro" id="IPR041715">
    <property type="entry name" value="HisRS-like_core"/>
</dbReference>
<dbReference type="InterPro" id="IPR004516">
    <property type="entry name" value="HisRS/HisZ"/>
</dbReference>
<dbReference type="InterPro" id="IPR033656">
    <property type="entry name" value="HisRS_anticodon"/>
</dbReference>
<dbReference type="NCBIfam" id="TIGR00442">
    <property type="entry name" value="hisS"/>
    <property type="match status" value="1"/>
</dbReference>
<dbReference type="PANTHER" id="PTHR11476:SF7">
    <property type="entry name" value="HISTIDINE--TRNA LIGASE"/>
    <property type="match status" value="1"/>
</dbReference>
<dbReference type="PANTHER" id="PTHR11476">
    <property type="entry name" value="HISTIDYL-TRNA SYNTHETASE"/>
    <property type="match status" value="1"/>
</dbReference>
<dbReference type="Pfam" id="PF03129">
    <property type="entry name" value="HGTP_anticodon"/>
    <property type="match status" value="1"/>
</dbReference>
<dbReference type="Pfam" id="PF13393">
    <property type="entry name" value="tRNA-synt_His"/>
    <property type="match status" value="1"/>
</dbReference>
<dbReference type="PIRSF" id="PIRSF001549">
    <property type="entry name" value="His-tRNA_synth"/>
    <property type="match status" value="1"/>
</dbReference>
<dbReference type="SUPFAM" id="SSF52954">
    <property type="entry name" value="Class II aaRS ABD-related"/>
    <property type="match status" value="1"/>
</dbReference>
<dbReference type="SUPFAM" id="SSF55681">
    <property type="entry name" value="Class II aaRS and biotin synthetases"/>
    <property type="match status" value="1"/>
</dbReference>
<dbReference type="PROSITE" id="PS50862">
    <property type="entry name" value="AA_TRNA_LIGASE_II"/>
    <property type="match status" value="1"/>
</dbReference>
<sequence length="466" mass="52151">MIKPRTPPGVLELLPREQIAFQRMLDVIRRNYERFGFLPVETPVFELSDVLLTKSGGETERQVYFVQSTGTLANAAESGATRLPELALRFDLTVPLARYVAEYEHVLAFPFRRYQIQRVYRGERAQRGRFREFYQCDIDVIGKQTLSIRYDAEVLAVIHAVFSELGIGDFQVQLNNRKVLRGFLESQGVRDGELQLAVLREVDKLDKRGVLDVRDTLIGQGFGIPAAQVENILTFVATRSTSHADALARLDALIEDSGPGSHDMLRQGVAELREVLTLVNVLGVPEHAYRLNFSIARGLDYYTGTVYETSLINHPQIGSICSGGRYENLANHYTQSKLPGVGISIGLTRLFWQLRDAGLMDGIAESSVQAMVVLMDEATLDDALDIARCLRIGGINTEVQMEAKKVSKQFQYASRAGIRFVVLAGDDERARGVVAVKDLTREQQFEIPREELASTLQVELEQAKVM</sequence>
<organism>
    <name type="scientific">Xylella fastidiosa (strain M12)</name>
    <dbReference type="NCBI Taxonomy" id="405440"/>
    <lineage>
        <taxon>Bacteria</taxon>
        <taxon>Pseudomonadati</taxon>
        <taxon>Pseudomonadota</taxon>
        <taxon>Gammaproteobacteria</taxon>
        <taxon>Lysobacterales</taxon>
        <taxon>Lysobacteraceae</taxon>
        <taxon>Xylella</taxon>
    </lineage>
</organism>
<gene>
    <name evidence="1" type="primary">hisS</name>
    <name type="ordered locus">Xfasm12_1422</name>
</gene>
<accession>B0U3B6</accession>
<evidence type="ECO:0000255" key="1">
    <source>
        <dbReference type="HAMAP-Rule" id="MF_00127"/>
    </source>
</evidence>
<comment type="catalytic activity">
    <reaction evidence="1">
        <text>tRNA(His) + L-histidine + ATP = L-histidyl-tRNA(His) + AMP + diphosphate + H(+)</text>
        <dbReference type="Rhea" id="RHEA:17313"/>
        <dbReference type="Rhea" id="RHEA-COMP:9665"/>
        <dbReference type="Rhea" id="RHEA-COMP:9689"/>
        <dbReference type="ChEBI" id="CHEBI:15378"/>
        <dbReference type="ChEBI" id="CHEBI:30616"/>
        <dbReference type="ChEBI" id="CHEBI:33019"/>
        <dbReference type="ChEBI" id="CHEBI:57595"/>
        <dbReference type="ChEBI" id="CHEBI:78442"/>
        <dbReference type="ChEBI" id="CHEBI:78527"/>
        <dbReference type="ChEBI" id="CHEBI:456215"/>
        <dbReference type="EC" id="6.1.1.21"/>
    </reaction>
</comment>
<comment type="subunit">
    <text evidence="1">Homodimer.</text>
</comment>
<comment type="subcellular location">
    <subcellularLocation>
        <location evidence="1">Cytoplasm</location>
    </subcellularLocation>
</comment>
<comment type="similarity">
    <text evidence="1">Belongs to the class-II aminoacyl-tRNA synthetase family.</text>
</comment>
<name>SYH_XYLFM</name>
<protein>
    <recommendedName>
        <fullName evidence="1">Histidine--tRNA ligase</fullName>
        <ecNumber evidence="1">6.1.1.21</ecNumber>
    </recommendedName>
    <alternativeName>
        <fullName evidence="1">Histidyl-tRNA synthetase</fullName>
        <shortName evidence="1">HisRS</shortName>
    </alternativeName>
</protein>
<feature type="chain" id="PRO_1000095614" description="Histidine--tRNA ligase">
    <location>
        <begin position="1"/>
        <end position="466"/>
    </location>
</feature>
<reference key="1">
    <citation type="journal article" date="2010" name="J. Bacteriol.">
        <title>Whole genome sequences of two Xylella fastidiosa strains (M12 and M23) causing almond leaf scorch disease in California.</title>
        <authorList>
            <person name="Chen J."/>
            <person name="Xie G."/>
            <person name="Han S."/>
            <person name="Chertkov O."/>
            <person name="Sims D."/>
            <person name="Civerolo E.L."/>
        </authorList>
    </citation>
    <scope>NUCLEOTIDE SEQUENCE [LARGE SCALE GENOMIC DNA]</scope>
    <source>
        <strain>M12</strain>
    </source>
</reference>
<proteinExistence type="inferred from homology"/>